<gene>
    <name type="primary">PARP1</name>
    <name type="ordered locus">Os07g0413700</name>
    <name type="ordered locus">LOC_Os07g23110</name>
    <name evidence="11" type="ORF">OsJ_23951</name>
    <name type="ORF">OSJNBa0077F02.113</name>
</gene>
<comment type="function">
    <text evidence="1">Involved in the base excision repair (BER) pathway, by catalyzing the poly(ADP-ribosyl)ation of a limited number of acceptor proteins involved in chromatin architecture and in DNA metabolism. This modification follows DNA damages and appears as an obligatory step in a detection/signaling pathway leading to the reparation of DNA strand breaks (By similarity).</text>
</comment>
<comment type="catalytic activity">
    <reaction evidence="1">
        <text>NAD(+) + (ADP-D-ribosyl)n-acceptor = nicotinamide + (ADP-D-ribosyl)n+1-acceptor + H(+).</text>
        <dbReference type="EC" id="2.4.2.30"/>
    </reaction>
</comment>
<comment type="catalytic activity">
    <reaction evidence="1">
        <text>L-aspartyl-[protein] + NAD(+) = 4-O-(ADP-D-ribosyl)-L-aspartyl-[protein] + nicotinamide</text>
        <dbReference type="Rhea" id="RHEA:54424"/>
        <dbReference type="Rhea" id="RHEA-COMP:9867"/>
        <dbReference type="Rhea" id="RHEA-COMP:13832"/>
        <dbReference type="ChEBI" id="CHEBI:17154"/>
        <dbReference type="ChEBI" id="CHEBI:29961"/>
        <dbReference type="ChEBI" id="CHEBI:57540"/>
        <dbReference type="ChEBI" id="CHEBI:138102"/>
    </reaction>
</comment>
<comment type="catalytic activity">
    <reaction evidence="1">
        <text>L-glutamyl-[protein] + NAD(+) = 5-O-(ADP-D-ribosyl)-L-glutamyl-[protein] + nicotinamide</text>
        <dbReference type="Rhea" id="RHEA:58224"/>
        <dbReference type="Rhea" id="RHEA-COMP:10208"/>
        <dbReference type="Rhea" id="RHEA-COMP:15089"/>
        <dbReference type="ChEBI" id="CHEBI:17154"/>
        <dbReference type="ChEBI" id="CHEBI:29973"/>
        <dbReference type="ChEBI" id="CHEBI:57540"/>
        <dbReference type="ChEBI" id="CHEBI:142540"/>
    </reaction>
</comment>
<comment type="subcellular location">
    <subcellularLocation>
        <location evidence="4">Nucleus</location>
    </subcellularLocation>
</comment>
<comment type="similarity">
    <text evidence="8 10">Belongs to the ARTD/PARP family.</text>
</comment>
<comment type="sequence caution" evidence="10">
    <conflict type="erroneous termination">
        <sequence resource="EMBL" id="AK103479"/>
    </conflict>
    <text>Truncated C-terminus.</text>
</comment>
<proteinExistence type="evidence at transcript level"/>
<name>PARP1_ORYSJ</name>
<feature type="chain" id="PRO_0000260502" description="Poly [ADP-ribose] polymerase 1">
    <location>
        <begin position="1"/>
        <end position="977"/>
    </location>
</feature>
<feature type="domain" description="PADR1 zinc-binding" evidence="8">
    <location>
        <begin position="227"/>
        <end position="365"/>
    </location>
</feature>
<feature type="domain" description="SAP" evidence="3">
    <location>
        <begin position="254"/>
        <end position="288"/>
    </location>
</feature>
<feature type="domain" description="BRCT" evidence="2">
    <location>
        <begin position="381"/>
        <end position="473"/>
    </location>
</feature>
<feature type="domain" description="WGR" evidence="7">
    <location>
        <begin position="504"/>
        <end position="604"/>
    </location>
</feature>
<feature type="domain" description="PARP alpha-helical" evidence="6">
    <location>
        <begin position="626"/>
        <end position="745"/>
    </location>
</feature>
<feature type="domain" description="PARP catalytic" evidence="5">
    <location>
        <begin position="752"/>
        <end position="977"/>
    </location>
</feature>
<feature type="zinc finger region" description="PARP-type 1" evidence="4">
    <location>
        <begin position="8"/>
        <end position="91"/>
    </location>
</feature>
<feature type="zinc finger region" description="PARP-type 2" evidence="4">
    <location>
        <begin position="104"/>
        <end position="179"/>
    </location>
</feature>
<feature type="region of interest" description="Disordered" evidence="9">
    <location>
        <begin position="177"/>
        <end position="199"/>
    </location>
</feature>
<feature type="region of interest" description="Disordered" evidence="9">
    <location>
        <begin position="218"/>
        <end position="237"/>
    </location>
</feature>
<feature type="region of interest" description="Zinc ribbon" evidence="8">
    <location>
        <begin position="291"/>
        <end position="335"/>
    </location>
</feature>
<feature type="binding site" evidence="4">
    <location>
        <position position="20"/>
    </location>
    <ligand>
        <name>Zn(2+)</name>
        <dbReference type="ChEBI" id="CHEBI:29105"/>
        <label>1</label>
    </ligand>
</feature>
<feature type="binding site" evidence="4">
    <location>
        <position position="23"/>
    </location>
    <ligand>
        <name>Zn(2+)</name>
        <dbReference type="ChEBI" id="CHEBI:29105"/>
        <label>1</label>
    </ligand>
</feature>
<feature type="binding site" evidence="4">
    <location>
        <position position="52"/>
    </location>
    <ligand>
        <name>Zn(2+)</name>
        <dbReference type="ChEBI" id="CHEBI:29105"/>
        <label>1</label>
    </ligand>
</feature>
<feature type="binding site" evidence="4">
    <location>
        <position position="55"/>
    </location>
    <ligand>
        <name>Zn(2+)</name>
        <dbReference type="ChEBI" id="CHEBI:29105"/>
        <label>1</label>
    </ligand>
</feature>
<feature type="binding site" evidence="4">
    <location>
        <position position="116"/>
    </location>
    <ligand>
        <name>Zn(2+)</name>
        <dbReference type="ChEBI" id="CHEBI:29105"/>
        <label>2</label>
    </ligand>
</feature>
<feature type="binding site" evidence="4">
    <location>
        <position position="119"/>
    </location>
    <ligand>
        <name>Zn(2+)</name>
        <dbReference type="ChEBI" id="CHEBI:29105"/>
        <label>2</label>
    </ligand>
</feature>
<feature type="binding site" evidence="4">
    <location>
        <position position="141"/>
    </location>
    <ligand>
        <name>Zn(2+)</name>
        <dbReference type="ChEBI" id="CHEBI:29105"/>
        <label>2</label>
    </ligand>
</feature>
<feature type="binding site" evidence="4">
    <location>
        <position position="144"/>
    </location>
    <ligand>
        <name>Zn(2+)</name>
        <dbReference type="ChEBI" id="CHEBI:29105"/>
        <label>2</label>
    </ligand>
</feature>
<feature type="binding site" evidence="8">
    <location>
        <position position="296"/>
    </location>
    <ligand>
        <name>Zn(2+)</name>
        <dbReference type="ChEBI" id="CHEBI:29105"/>
        <label>3</label>
    </ligand>
</feature>
<feature type="binding site" evidence="8">
    <location>
        <position position="299"/>
    </location>
    <ligand>
        <name>Zn(2+)</name>
        <dbReference type="ChEBI" id="CHEBI:29105"/>
        <label>3</label>
    </ligand>
</feature>
<feature type="binding site" evidence="8">
    <location>
        <position position="312"/>
    </location>
    <ligand>
        <name>Zn(2+)</name>
        <dbReference type="ChEBI" id="CHEBI:29105"/>
        <label>3</label>
    </ligand>
</feature>
<feature type="binding site" evidence="8">
    <location>
        <position position="322"/>
    </location>
    <ligand>
        <name>Zn(2+)</name>
        <dbReference type="ChEBI" id="CHEBI:29105"/>
        <label>3</label>
    </ligand>
</feature>
<feature type="sequence conflict" description="In Ref. 5; AK103479." evidence="10" ref="5">
    <original>S</original>
    <variation>F</variation>
    <location>
        <position position="233"/>
    </location>
</feature>
<feature type="sequence conflict" description="In Ref. 5; AK103479." evidence="10" ref="5">
    <original>G</original>
    <variation>S</variation>
    <location>
        <position position="612"/>
    </location>
</feature>
<organism>
    <name type="scientific">Oryza sativa subsp. japonica</name>
    <name type="common">Rice</name>
    <dbReference type="NCBI Taxonomy" id="39947"/>
    <lineage>
        <taxon>Eukaryota</taxon>
        <taxon>Viridiplantae</taxon>
        <taxon>Streptophyta</taxon>
        <taxon>Embryophyta</taxon>
        <taxon>Tracheophyta</taxon>
        <taxon>Spermatophyta</taxon>
        <taxon>Magnoliopsida</taxon>
        <taxon>Liliopsida</taxon>
        <taxon>Poales</taxon>
        <taxon>Poaceae</taxon>
        <taxon>BOP clade</taxon>
        <taxon>Oryzoideae</taxon>
        <taxon>Oryzeae</taxon>
        <taxon>Oryzinae</taxon>
        <taxon>Oryza</taxon>
        <taxon>Oryza sativa</taxon>
    </lineage>
</organism>
<evidence type="ECO:0000250" key="1">
    <source>
        <dbReference type="UniProtKB" id="P09874"/>
    </source>
</evidence>
<evidence type="ECO:0000255" key="2">
    <source>
        <dbReference type="PROSITE-ProRule" id="PRU00033"/>
    </source>
</evidence>
<evidence type="ECO:0000255" key="3">
    <source>
        <dbReference type="PROSITE-ProRule" id="PRU00186"/>
    </source>
</evidence>
<evidence type="ECO:0000255" key="4">
    <source>
        <dbReference type="PROSITE-ProRule" id="PRU00264"/>
    </source>
</evidence>
<evidence type="ECO:0000255" key="5">
    <source>
        <dbReference type="PROSITE-ProRule" id="PRU00397"/>
    </source>
</evidence>
<evidence type="ECO:0000255" key="6">
    <source>
        <dbReference type="PROSITE-ProRule" id="PRU00398"/>
    </source>
</evidence>
<evidence type="ECO:0000255" key="7">
    <source>
        <dbReference type="PROSITE-ProRule" id="PRU01321"/>
    </source>
</evidence>
<evidence type="ECO:0000255" key="8">
    <source>
        <dbReference type="PROSITE-ProRule" id="PRU01351"/>
    </source>
</evidence>
<evidence type="ECO:0000256" key="9">
    <source>
        <dbReference type="SAM" id="MobiDB-lite"/>
    </source>
</evidence>
<evidence type="ECO:0000305" key="10"/>
<evidence type="ECO:0000312" key="11">
    <source>
        <dbReference type="EMBL" id="EEE67019.1"/>
    </source>
</evidence>
<reference key="1">
    <citation type="journal article" date="2005" name="Nature">
        <title>The map-based sequence of the rice genome.</title>
        <authorList>
            <consortium name="International rice genome sequencing project (IRGSP)"/>
        </authorList>
    </citation>
    <scope>NUCLEOTIDE SEQUENCE [LARGE SCALE GENOMIC DNA]</scope>
    <source>
        <strain>cv. Nipponbare</strain>
    </source>
</reference>
<reference key="2">
    <citation type="journal article" date="2008" name="Nucleic Acids Res.">
        <title>The rice annotation project database (RAP-DB): 2008 update.</title>
        <authorList>
            <consortium name="The rice annotation project (RAP)"/>
        </authorList>
    </citation>
    <scope>GENOME REANNOTATION</scope>
    <source>
        <strain>cv. Nipponbare</strain>
    </source>
</reference>
<reference key="3">
    <citation type="journal article" date="2013" name="Rice">
        <title>Improvement of the Oryza sativa Nipponbare reference genome using next generation sequence and optical map data.</title>
        <authorList>
            <person name="Kawahara Y."/>
            <person name="de la Bastide M."/>
            <person name="Hamilton J.P."/>
            <person name="Kanamori H."/>
            <person name="McCombie W.R."/>
            <person name="Ouyang S."/>
            <person name="Schwartz D.C."/>
            <person name="Tanaka T."/>
            <person name="Wu J."/>
            <person name="Zhou S."/>
            <person name="Childs K.L."/>
            <person name="Davidson R.M."/>
            <person name="Lin H."/>
            <person name="Quesada-Ocampo L."/>
            <person name="Vaillancourt B."/>
            <person name="Sakai H."/>
            <person name="Lee S.S."/>
            <person name="Kim J."/>
            <person name="Numa H."/>
            <person name="Itoh T."/>
            <person name="Buell C.R."/>
            <person name="Matsumoto T."/>
        </authorList>
    </citation>
    <scope>GENOME REANNOTATION</scope>
    <source>
        <strain>cv. Nipponbare</strain>
    </source>
</reference>
<reference key="4">
    <citation type="journal article" date="2005" name="PLoS Biol.">
        <title>The genomes of Oryza sativa: a history of duplications.</title>
        <authorList>
            <person name="Yu J."/>
            <person name="Wang J."/>
            <person name="Lin W."/>
            <person name="Li S."/>
            <person name="Li H."/>
            <person name="Zhou J."/>
            <person name="Ni P."/>
            <person name="Dong W."/>
            <person name="Hu S."/>
            <person name="Zeng C."/>
            <person name="Zhang J."/>
            <person name="Zhang Y."/>
            <person name="Li R."/>
            <person name="Xu Z."/>
            <person name="Li S."/>
            <person name="Li X."/>
            <person name="Zheng H."/>
            <person name="Cong L."/>
            <person name="Lin L."/>
            <person name="Yin J."/>
            <person name="Geng J."/>
            <person name="Li G."/>
            <person name="Shi J."/>
            <person name="Liu J."/>
            <person name="Lv H."/>
            <person name="Li J."/>
            <person name="Wang J."/>
            <person name="Deng Y."/>
            <person name="Ran L."/>
            <person name="Shi X."/>
            <person name="Wang X."/>
            <person name="Wu Q."/>
            <person name="Li C."/>
            <person name="Ren X."/>
            <person name="Wang J."/>
            <person name="Wang X."/>
            <person name="Li D."/>
            <person name="Liu D."/>
            <person name="Zhang X."/>
            <person name="Ji Z."/>
            <person name="Zhao W."/>
            <person name="Sun Y."/>
            <person name="Zhang Z."/>
            <person name="Bao J."/>
            <person name="Han Y."/>
            <person name="Dong L."/>
            <person name="Ji J."/>
            <person name="Chen P."/>
            <person name="Wu S."/>
            <person name="Liu J."/>
            <person name="Xiao Y."/>
            <person name="Bu D."/>
            <person name="Tan J."/>
            <person name="Yang L."/>
            <person name="Ye C."/>
            <person name="Zhang J."/>
            <person name="Xu J."/>
            <person name="Zhou Y."/>
            <person name="Yu Y."/>
            <person name="Zhang B."/>
            <person name="Zhuang S."/>
            <person name="Wei H."/>
            <person name="Liu B."/>
            <person name="Lei M."/>
            <person name="Yu H."/>
            <person name="Li Y."/>
            <person name="Xu H."/>
            <person name="Wei S."/>
            <person name="He X."/>
            <person name="Fang L."/>
            <person name="Zhang Z."/>
            <person name="Zhang Y."/>
            <person name="Huang X."/>
            <person name="Su Z."/>
            <person name="Tong W."/>
            <person name="Li J."/>
            <person name="Tong Z."/>
            <person name="Li S."/>
            <person name="Ye J."/>
            <person name="Wang L."/>
            <person name="Fang L."/>
            <person name="Lei T."/>
            <person name="Chen C.-S."/>
            <person name="Chen H.-C."/>
            <person name="Xu Z."/>
            <person name="Li H."/>
            <person name="Huang H."/>
            <person name="Zhang F."/>
            <person name="Xu H."/>
            <person name="Li N."/>
            <person name="Zhao C."/>
            <person name="Li S."/>
            <person name="Dong L."/>
            <person name="Huang Y."/>
            <person name="Li L."/>
            <person name="Xi Y."/>
            <person name="Qi Q."/>
            <person name="Li W."/>
            <person name="Zhang B."/>
            <person name="Hu W."/>
            <person name="Zhang Y."/>
            <person name="Tian X."/>
            <person name="Jiao Y."/>
            <person name="Liang X."/>
            <person name="Jin J."/>
            <person name="Gao L."/>
            <person name="Zheng W."/>
            <person name="Hao B."/>
            <person name="Liu S.-M."/>
            <person name="Wang W."/>
            <person name="Yuan L."/>
            <person name="Cao M."/>
            <person name="McDermott J."/>
            <person name="Samudrala R."/>
            <person name="Wang J."/>
            <person name="Wong G.K.-S."/>
            <person name="Yang H."/>
        </authorList>
    </citation>
    <scope>NUCLEOTIDE SEQUENCE [LARGE SCALE GENOMIC DNA]</scope>
    <source>
        <strain>cv. Nipponbare</strain>
    </source>
</reference>
<reference key="5">
    <citation type="journal article" date="2003" name="Science">
        <title>Collection, mapping, and annotation of over 28,000 cDNA clones from japonica rice.</title>
        <authorList>
            <consortium name="The rice full-length cDNA consortium"/>
        </authorList>
    </citation>
    <scope>NUCLEOTIDE SEQUENCE [LARGE SCALE MRNA]</scope>
    <source>
        <strain>cv. Nipponbare</strain>
    </source>
</reference>
<accession>Q7EYV7</accession>
<accession>B9FWT2</accession>
<protein>
    <recommendedName>
        <fullName>Poly [ADP-ribose] polymerase 1</fullName>
        <shortName>PARP-1</shortName>
        <ecNumber>2.4.2.30</ecNumber>
    </recommendedName>
    <alternativeName>
        <fullName>NAD(+) ADP-ribosyltransferase 1</fullName>
        <shortName>ADPRT-1</shortName>
    </alternativeName>
    <alternativeName>
        <fullName>Poly[ADP-ribose] synthase 1</fullName>
    </alternativeName>
    <alternativeName>
        <fullName evidence="1">Protein ADP-ribosyltransferase PARP1</fullName>
        <ecNumber evidence="1">2.4.2.-</ecNumber>
    </alternativeName>
</protein>
<dbReference type="EC" id="2.4.2.30"/>
<dbReference type="EC" id="2.4.2.-" evidence="1"/>
<dbReference type="EMBL" id="AP005247">
    <property type="protein sequence ID" value="BAC84104.1"/>
    <property type="molecule type" value="Genomic_DNA"/>
</dbReference>
<dbReference type="EMBL" id="AP008213">
    <property type="protein sequence ID" value="BAF21367.1"/>
    <property type="molecule type" value="Genomic_DNA"/>
</dbReference>
<dbReference type="EMBL" id="AP014963">
    <property type="protein sequence ID" value="BAT01136.1"/>
    <property type="molecule type" value="Genomic_DNA"/>
</dbReference>
<dbReference type="EMBL" id="CM000144">
    <property type="protein sequence ID" value="EEE67019.1"/>
    <property type="molecule type" value="Genomic_DNA"/>
</dbReference>
<dbReference type="EMBL" id="AK103479">
    <property type="status" value="NOT_ANNOTATED_CDS"/>
    <property type="molecule type" value="mRNA"/>
</dbReference>
<dbReference type="RefSeq" id="XP_015647732.1">
    <property type="nucleotide sequence ID" value="XM_015792246.1"/>
</dbReference>
<dbReference type="SMR" id="Q7EYV7"/>
<dbReference type="FunCoup" id="Q7EYV7">
    <property type="interactions" value="1745"/>
</dbReference>
<dbReference type="STRING" id="39947.Q7EYV7"/>
<dbReference type="PaxDb" id="39947-Q7EYV7"/>
<dbReference type="EnsemblPlants" id="Os07t0413700-01">
    <property type="protein sequence ID" value="Os07t0413700-01"/>
    <property type="gene ID" value="Os07g0413700"/>
</dbReference>
<dbReference type="Gramene" id="Os07t0413700-01">
    <property type="protein sequence ID" value="Os07t0413700-01"/>
    <property type="gene ID" value="Os07g0413700"/>
</dbReference>
<dbReference type="KEGG" id="dosa:Os07g0413700"/>
<dbReference type="eggNOG" id="KOG1037">
    <property type="taxonomic scope" value="Eukaryota"/>
</dbReference>
<dbReference type="HOGENOM" id="CLU_004841_0_1_1"/>
<dbReference type="InParanoid" id="Q7EYV7"/>
<dbReference type="OMA" id="MNFKYKY"/>
<dbReference type="OrthoDB" id="2017365at2759"/>
<dbReference type="Proteomes" id="UP000000763">
    <property type="component" value="Chromosome 7"/>
</dbReference>
<dbReference type="Proteomes" id="UP000007752">
    <property type="component" value="Chromosome 7"/>
</dbReference>
<dbReference type="Proteomes" id="UP000059680">
    <property type="component" value="Chromosome 7"/>
</dbReference>
<dbReference type="ExpressionAtlas" id="Q7EYV7">
    <property type="expression patterns" value="baseline and differential"/>
</dbReference>
<dbReference type="GO" id="GO:0005730">
    <property type="term" value="C:nucleolus"/>
    <property type="evidence" value="ECO:0000318"/>
    <property type="project" value="GO_Central"/>
</dbReference>
<dbReference type="GO" id="GO:0003677">
    <property type="term" value="F:DNA binding"/>
    <property type="evidence" value="ECO:0007669"/>
    <property type="project" value="UniProtKB-KW"/>
</dbReference>
<dbReference type="GO" id="GO:0051287">
    <property type="term" value="F:NAD binding"/>
    <property type="evidence" value="ECO:0007669"/>
    <property type="project" value="InterPro"/>
</dbReference>
<dbReference type="GO" id="GO:0003950">
    <property type="term" value="F:NAD+ poly-ADP-ribosyltransferase activity"/>
    <property type="evidence" value="ECO:0000318"/>
    <property type="project" value="GO_Central"/>
</dbReference>
<dbReference type="GO" id="GO:0140806">
    <property type="term" value="F:NAD+-protein-aspartate ADP-ribosyltransferase activity"/>
    <property type="evidence" value="ECO:0007669"/>
    <property type="project" value="RHEA"/>
</dbReference>
<dbReference type="GO" id="GO:0140807">
    <property type="term" value="F:NAD+-protein-glutamate ADP-ribosyltransferase activity"/>
    <property type="evidence" value="ECO:0007669"/>
    <property type="project" value="RHEA"/>
</dbReference>
<dbReference type="GO" id="GO:0016779">
    <property type="term" value="F:nucleotidyltransferase activity"/>
    <property type="evidence" value="ECO:0007669"/>
    <property type="project" value="UniProtKB-KW"/>
</dbReference>
<dbReference type="GO" id="GO:0008270">
    <property type="term" value="F:zinc ion binding"/>
    <property type="evidence" value="ECO:0007669"/>
    <property type="project" value="UniProtKB-KW"/>
</dbReference>
<dbReference type="GO" id="GO:0030592">
    <property type="term" value="P:DNA ADP-ribosylation"/>
    <property type="evidence" value="ECO:0007669"/>
    <property type="project" value="EnsemblPlants"/>
</dbReference>
<dbReference type="GO" id="GO:0006302">
    <property type="term" value="P:double-strand break repair"/>
    <property type="evidence" value="ECO:0000318"/>
    <property type="project" value="GO_Central"/>
</dbReference>
<dbReference type="GO" id="GO:0070212">
    <property type="term" value="P:protein poly-ADP-ribosylation"/>
    <property type="evidence" value="ECO:0007669"/>
    <property type="project" value="EnsemblPlants"/>
</dbReference>
<dbReference type="GO" id="GO:0009737">
    <property type="term" value="P:response to abscisic acid"/>
    <property type="evidence" value="ECO:0007669"/>
    <property type="project" value="EnsemblPlants"/>
</dbReference>
<dbReference type="GO" id="GO:0006979">
    <property type="term" value="P:response to oxidative stress"/>
    <property type="evidence" value="ECO:0007669"/>
    <property type="project" value="EnsemblPlants"/>
</dbReference>
<dbReference type="CDD" id="cd01437">
    <property type="entry name" value="parp_like"/>
    <property type="match status" value="1"/>
</dbReference>
<dbReference type="CDD" id="cd08001">
    <property type="entry name" value="WGR_PARP1_like"/>
    <property type="match status" value="1"/>
</dbReference>
<dbReference type="FunFam" id="1.10.20.130:FF:000001">
    <property type="entry name" value="Poly [ADP-ribose] polymerase"/>
    <property type="match status" value="1"/>
</dbReference>
<dbReference type="FunFam" id="1.20.142.10:FF:000002">
    <property type="entry name" value="Poly [ADP-ribose] polymerase"/>
    <property type="match status" value="1"/>
</dbReference>
<dbReference type="FunFam" id="2.20.25.630:FF:000001">
    <property type="entry name" value="Poly [ADP-ribose] polymerase"/>
    <property type="match status" value="1"/>
</dbReference>
<dbReference type="FunFam" id="3.30.1740.10:FF:000004">
    <property type="entry name" value="Poly [ADP-ribose] polymerase"/>
    <property type="match status" value="1"/>
</dbReference>
<dbReference type="FunFam" id="3.30.1740.10:FF:000005">
    <property type="entry name" value="Poly [ADP-ribose] polymerase"/>
    <property type="match status" value="1"/>
</dbReference>
<dbReference type="FunFam" id="3.40.50.10190:FF:000051">
    <property type="entry name" value="Poly [ADP-ribose] polymerase"/>
    <property type="match status" value="1"/>
</dbReference>
<dbReference type="FunFam" id="3.90.228.10:FF:000002">
    <property type="entry name" value="Poly [ADP-ribose] polymerase"/>
    <property type="match status" value="1"/>
</dbReference>
<dbReference type="Gene3D" id="1.10.20.130">
    <property type="match status" value="1"/>
</dbReference>
<dbReference type="Gene3D" id="2.20.25.630">
    <property type="match status" value="1"/>
</dbReference>
<dbReference type="Gene3D" id="3.90.228.10">
    <property type="match status" value="1"/>
</dbReference>
<dbReference type="Gene3D" id="3.40.50.10190">
    <property type="entry name" value="BRCT domain"/>
    <property type="match status" value="1"/>
</dbReference>
<dbReference type="Gene3D" id="1.20.142.10">
    <property type="entry name" value="Poly(ADP-ribose) polymerase, regulatory domain"/>
    <property type="match status" value="1"/>
</dbReference>
<dbReference type="Gene3D" id="3.30.1740.10">
    <property type="entry name" value="Zinc finger, PARP-type"/>
    <property type="match status" value="2"/>
</dbReference>
<dbReference type="InterPro" id="IPR050800">
    <property type="entry name" value="ARTD/PARP"/>
</dbReference>
<dbReference type="InterPro" id="IPR001357">
    <property type="entry name" value="BRCT_dom"/>
</dbReference>
<dbReference type="InterPro" id="IPR036420">
    <property type="entry name" value="BRCT_dom_sf"/>
</dbReference>
<dbReference type="InterPro" id="IPR038650">
    <property type="entry name" value="PADR1_C_dom_sf"/>
</dbReference>
<dbReference type="InterPro" id="IPR008288">
    <property type="entry name" value="PARP"/>
</dbReference>
<dbReference type="InterPro" id="IPR049296">
    <property type="entry name" value="PARP1-like_PADR1_N"/>
</dbReference>
<dbReference type="InterPro" id="IPR012982">
    <property type="entry name" value="PARP1-like_PADR1_Zn_ribbon"/>
</dbReference>
<dbReference type="InterPro" id="IPR012317">
    <property type="entry name" value="Poly(ADP-ribose)pol_cat_dom"/>
</dbReference>
<dbReference type="InterPro" id="IPR004102">
    <property type="entry name" value="Poly(ADP-ribose)pol_reg_dom"/>
</dbReference>
<dbReference type="InterPro" id="IPR036616">
    <property type="entry name" value="Poly(ADP-ribose)pol_reg_dom_sf"/>
</dbReference>
<dbReference type="InterPro" id="IPR003034">
    <property type="entry name" value="SAP_dom"/>
</dbReference>
<dbReference type="InterPro" id="IPR036930">
    <property type="entry name" value="WGR_dom_sf"/>
</dbReference>
<dbReference type="InterPro" id="IPR008893">
    <property type="entry name" value="WGR_domain"/>
</dbReference>
<dbReference type="InterPro" id="IPR001510">
    <property type="entry name" value="Znf_PARP"/>
</dbReference>
<dbReference type="InterPro" id="IPR036957">
    <property type="entry name" value="Znf_PARP_sf"/>
</dbReference>
<dbReference type="PANTHER" id="PTHR10459">
    <property type="entry name" value="DNA LIGASE"/>
    <property type="match status" value="1"/>
</dbReference>
<dbReference type="PANTHER" id="PTHR10459:SF80">
    <property type="entry name" value="POLY [ADP-RIBOSE] POLYMERASE 1"/>
    <property type="match status" value="1"/>
</dbReference>
<dbReference type="Pfam" id="PF00533">
    <property type="entry name" value="BRCT"/>
    <property type="match status" value="1"/>
</dbReference>
<dbReference type="Pfam" id="PF21728">
    <property type="entry name" value="PADR1_N"/>
    <property type="match status" value="1"/>
</dbReference>
<dbReference type="Pfam" id="PF00644">
    <property type="entry name" value="PARP"/>
    <property type="match status" value="1"/>
</dbReference>
<dbReference type="Pfam" id="PF02877">
    <property type="entry name" value="PARP_reg"/>
    <property type="match status" value="1"/>
</dbReference>
<dbReference type="Pfam" id="PF05406">
    <property type="entry name" value="WGR"/>
    <property type="match status" value="1"/>
</dbReference>
<dbReference type="Pfam" id="PF00645">
    <property type="entry name" value="zf-PARP"/>
    <property type="match status" value="1"/>
</dbReference>
<dbReference type="Pfam" id="PF08063">
    <property type="entry name" value="Zn_ribbon_PADR1"/>
    <property type="match status" value="1"/>
</dbReference>
<dbReference type="PIRSF" id="PIRSF000489">
    <property type="entry name" value="NAD_ADPRT"/>
    <property type="match status" value="1"/>
</dbReference>
<dbReference type="SMART" id="SM00292">
    <property type="entry name" value="BRCT"/>
    <property type="match status" value="1"/>
</dbReference>
<dbReference type="SMART" id="SM01335">
    <property type="entry name" value="PADR1"/>
    <property type="match status" value="1"/>
</dbReference>
<dbReference type="SMART" id="SM00773">
    <property type="entry name" value="WGR"/>
    <property type="match status" value="1"/>
</dbReference>
<dbReference type="SMART" id="SM01336">
    <property type="entry name" value="zf-PARP"/>
    <property type="match status" value="2"/>
</dbReference>
<dbReference type="SUPFAM" id="SSF56399">
    <property type="entry name" value="ADP-ribosylation"/>
    <property type="match status" value="1"/>
</dbReference>
<dbReference type="SUPFAM" id="SSF52113">
    <property type="entry name" value="BRCT domain"/>
    <property type="match status" value="1"/>
</dbReference>
<dbReference type="SUPFAM" id="SSF47587">
    <property type="entry name" value="Domain of poly(ADP-ribose) polymerase"/>
    <property type="match status" value="1"/>
</dbReference>
<dbReference type="SUPFAM" id="SSF57716">
    <property type="entry name" value="Glucocorticoid receptor-like (DNA-binding domain)"/>
    <property type="match status" value="2"/>
</dbReference>
<dbReference type="SUPFAM" id="SSF142921">
    <property type="entry name" value="WGR domain-like"/>
    <property type="match status" value="1"/>
</dbReference>
<dbReference type="PROSITE" id="PS50172">
    <property type="entry name" value="BRCT"/>
    <property type="match status" value="1"/>
</dbReference>
<dbReference type="PROSITE" id="PS52007">
    <property type="entry name" value="PADR1"/>
    <property type="match status" value="1"/>
</dbReference>
<dbReference type="PROSITE" id="PS51060">
    <property type="entry name" value="PARP_ALPHA_HD"/>
    <property type="match status" value="1"/>
</dbReference>
<dbReference type="PROSITE" id="PS51059">
    <property type="entry name" value="PARP_CATALYTIC"/>
    <property type="match status" value="1"/>
</dbReference>
<dbReference type="PROSITE" id="PS50800">
    <property type="entry name" value="SAP"/>
    <property type="match status" value="1"/>
</dbReference>
<dbReference type="PROSITE" id="PS51977">
    <property type="entry name" value="WGR"/>
    <property type="match status" value="1"/>
</dbReference>
<dbReference type="PROSITE" id="PS50064">
    <property type="entry name" value="ZF_PARP_2"/>
    <property type="match status" value="2"/>
</dbReference>
<sequence length="977" mass="110156">MAAPPKAWKAEYAKSGRSSCKSCRSPIGKDQLRLGKMVQATQFDGLMPMWNHASCILSKKNQIKSVDDVEGIDTLRWDDQEKIRNYVGSAPATASSAAAISDKCTIEVAKSARTSCRRCGEKIKKGTVRVSSKLEGQGWYHASCFLEMSPAATVENFSGWEILSHEDKRAVLDLVKKDAPSSGQTSSKGSKRKNNQNDIHDCKAPKIIRSISEGTAEDKGKAVVSHDSNANSSDLQEKLKEQSDTLWKLKDELKKHVSTAELRNMLEANGQDTSGPERHLLDRCADGMLFGALGTCPVCSSFLYYHGGQYHCSGYVSEWSKCTYSTTEPVRSKKKWKIPDEMDNGYLTKWFKSQKAKKPERVLPPMSPEKSLCQSTQQNRSFLSEGLDKLRVSIVGQSKDVVDGWKQKLKDAGANFNATVTKDSSCLVLCSELESENAEVKKARRLKIPILREGYLGECIRKNRVLPFDLYKVEAALESSKGGTMTVKVKGRSAVHESSGLQDTGHILEDGKSIYNTTLNMSDLTRGVNSYYILQVIEEDNGSDCYVFRKWGRVGNEKIGGTKLEEMSKIHAIQEFRRLFLEKTGNPWEAWEQKTNFQKQPGKFYPLDIDYGVRQGPKRKDIDKMKSSLPPQLLELMNMLFNIETYRAAMLEFKINMSEMPLGKLSKENIQKGFEALTEIQNLLGNTNNQELAVRESLIVAASNRFFTLIPSIHPHIIQDEDDLMVKVKMLEALQDIEIASKLVGFDSDNDESLDDKYKKLRCAITPLPHDCEDYKLVEKYLLNTHAPTHKEWSLELEEVFSLDRDGEFSKYSRYKNNLHNKMLLWHGSRLTNYVGILSQGLRIAPPEAPVTGYMFGKGLYFADLVSKSAQYCYVDRKNPVGLMLLSEVALGDMYELKKATSMDKPPRGKHSTKGLGKTVPLESEFAKWRDDVVVPCGKPVPASIKTSELMYNEYIVYNTSQVKMQYLLKVRFHHKR</sequence>
<keyword id="KW-0013">ADP-ribosylation</keyword>
<keyword id="KW-0238">DNA-binding</keyword>
<keyword id="KW-0328">Glycosyltransferase</keyword>
<keyword id="KW-0479">Metal-binding</keyword>
<keyword id="KW-0520">NAD</keyword>
<keyword id="KW-0548">Nucleotidyltransferase</keyword>
<keyword id="KW-0539">Nucleus</keyword>
<keyword id="KW-1185">Reference proteome</keyword>
<keyword id="KW-0677">Repeat</keyword>
<keyword id="KW-0808">Transferase</keyword>
<keyword id="KW-0862">Zinc</keyword>
<keyword id="KW-0863">Zinc-finger</keyword>